<organism>
    <name type="scientific">Caenorhabditis elegans</name>
    <dbReference type="NCBI Taxonomy" id="6239"/>
    <lineage>
        <taxon>Eukaryota</taxon>
        <taxon>Metazoa</taxon>
        <taxon>Ecdysozoa</taxon>
        <taxon>Nematoda</taxon>
        <taxon>Chromadorea</taxon>
        <taxon>Rhabditida</taxon>
        <taxon>Rhabditina</taxon>
        <taxon>Rhabditomorpha</taxon>
        <taxon>Rhabditoidea</taxon>
        <taxon>Rhabditidae</taxon>
        <taxon>Peloderinae</taxon>
        <taxon>Caenorhabditis</taxon>
    </lineage>
</organism>
<gene>
    <name type="ORF">ZK856.11</name>
</gene>
<keyword id="KW-1185">Reference proteome</keyword>
<keyword id="KW-0694">RNA-binding</keyword>
<protein>
    <recommendedName>
        <fullName>Probable RNA-binding protein EIF1AD</fullName>
    </recommendedName>
    <alternativeName>
        <fullName>Eukaryotic translation initiation factor 1A domain-containing protein</fullName>
    </alternativeName>
</protein>
<feature type="chain" id="PRO_0000314161" description="Probable RNA-binding protein EIF1AD">
    <location>
        <begin position="1"/>
        <end position="175"/>
    </location>
</feature>
<feature type="domain" description="S1-like" evidence="1">
    <location>
        <begin position="5"/>
        <end position="89"/>
    </location>
</feature>
<feature type="region of interest" description="Disordered" evidence="2">
    <location>
        <begin position="116"/>
        <end position="175"/>
    </location>
</feature>
<feature type="compositionally biased region" description="Basic and acidic residues" evidence="2">
    <location>
        <begin position="116"/>
        <end position="128"/>
    </location>
</feature>
<feature type="compositionally biased region" description="Acidic residues" evidence="2">
    <location>
        <begin position="129"/>
        <end position="163"/>
    </location>
</feature>
<feature type="compositionally biased region" description="Polar residues" evidence="2">
    <location>
        <begin position="165"/>
        <end position="175"/>
    </location>
</feature>
<sequence length="175" mass="20419">MSAATKKRYITNKVGSEFYELVDEDIIAQVRQSRGNNLHEVLDQNGDSYVVSMPTKFRKSVWLRRDQFVVVRPITEGDKVKGEIEYILDQDNVLYIRELGKWPTCFEENALKMTREAKRGQTSDKMIDDDMLPPSESEEEDESEGEETYDEDDVDDEEEEEFDTYNPNRMQAPSK</sequence>
<name>EIF1A_CAEEL</name>
<dbReference type="EMBL" id="Z70783">
    <property type="protein sequence ID" value="CAA94859.1"/>
    <property type="molecule type" value="Genomic_DNA"/>
</dbReference>
<dbReference type="PIR" id="T28050">
    <property type="entry name" value="T28050"/>
</dbReference>
<dbReference type="RefSeq" id="NP_505624.1">
    <property type="nucleotide sequence ID" value="NM_073223.6"/>
</dbReference>
<dbReference type="SMR" id="Q23646"/>
<dbReference type="BioGRID" id="44447">
    <property type="interactions" value="5"/>
</dbReference>
<dbReference type="DIP" id="DIP-27289N"/>
<dbReference type="FunCoup" id="Q23646">
    <property type="interactions" value="2606"/>
</dbReference>
<dbReference type="IntAct" id="Q23646">
    <property type="interactions" value="4"/>
</dbReference>
<dbReference type="STRING" id="6239.ZK856.11.1"/>
<dbReference type="PaxDb" id="6239-ZK856.11"/>
<dbReference type="PeptideAtlas" id="Q23646"/>
<dbReference type="EnsemblMetazoa" id="ZK856.11.1">
    <property type="protein sequence ID" value="ZK856.11.1"/>
    <property type="gene ID" value="WBGene00014112"/>
</dbReference>
<dbReference type="GeneID" id="179417"/>
<dbReference type="KEGG" id="cel:CELE_ZK856.11"/>
<dbReference type="UCSC" id="ZK856.11">
    <property type="organism name" value="c. elegans"/>
</dbReference>
<dbReference type="AGR" id="WB:WBGene00014112"/>
<dbReference type="CTD" id="179417"/>
<dbReference type="WormBase" id="ZK856.11">
    <property type="protein sequence ID" value="CE06668"/>
    <property type="gene ID" value="WBGene00014112"/>
</dbReference>
<dbReference type="eggNOG" id="KOG2925">
    <property type="taxonomic scope" value="Eukaryota"/>
</dbReference>
<dbReference type="GeneTree" id="ENSGT00390000011180"/>
<dbReference type="HOGENOM" id="CLU_106477_1_0_1"/>
<dbReference type="InParanoid" id="Q23646"/>
<dbReference type="OMA" id="PNRMQAP"/>
<dbReference type="OrthoDB" id="1738325at2759"/>
<dbReference type="PhylomeDB" id="Q23646"/>
<dbReference type="PRO" id="PR:Q23646"/>
<dbReference type="Proteomes" id="UP000001940">
    <property type="component" value="Chromosome V"/>
</dbReference>
<dbReference type="Bgee" id="WBGene00014112">
    <property type="expression patterns" value="Expressed in embryo and 3 other cell types or tissues"/>
</dbReference>
<dbReference type="GO" id="GO:0005634">
    <property type="term" value="C:nucleus"/>
    <property type="evidence" value="ECO:0007005"/>
    <property type="project" value="WormBase"/>
</dbReference>
<dbReference type="GO" id="GO:0003723">
    <property type="term" value="F:RNA binding"/>
    <property type="evidence" value="ECO:0007669"/>
    <property type="project" value="UniProtKB-KW"/>
</dbReference>
<dbReference type="GO" id="GO:0003743">
    <property type="term" value="F:translation initiation factor activity"/>
    <property type="evidence" value="ECO:0007669"/>
    <property type="project" value="InterPro"/>
</dbReference>
<dbReference type="Gene3D" id="2.40.50.140">
    <property type="entry name" value="Nucleic acid-binding proteins"/>
    <property type="match status" value="1"/>
</dbReference>
<dbReference type="InterPro" id="IPR039294">
    <property type="entry name" value="EIF1AD"/>
</dbReference>
<dbReference type="InterPro" id="IPR012340">
    <property type="entry name" value="NA-bd_OB-fold"/>
</dbReference>
<dbReference type="InterPro" id="IPR006196">
    <property type="entry name" value="RNA-binding_domain_S1_IF1"/>
</dbReference>
<dbReference type="InterPro" id="IPR001253">
    <property type="entry name" value="TIF_eIF-1A"/>
</dbReference>
<dbReference type="PANTHER" id="PTHR21641:SF0">
    <property type="entry name" value="RNA-BINDING PROTEIN EIF1AD-RELATED"/>
    <property type="match status" value="1"/>
</dbReference>
<dbReference type="PANTHER" id="PTHR21641">
    <property type="entry name" value="TRANSLATION INITIATION FACTOR-RELATED"/>
    <property type="match status" value="1"/>
</dbReference>
<dbReference type="Pfam" id="PF01176">
    <property type="entry name" value="eIF-1a"/>
    <property type="match status" value="1"/>
</dbReference>
<dbReference type="SMART" id="SM00652">
    <property type="entry name" value="eIF1a"/>
    <property type="match status" value="1"/>
</dbReference>
<dbReference type="SUPFAM" id="SSF50249">
    <property type="entry name" value="Nucleic acid-binding proteins"/>
    <property type="match status" value="1"/>
</dbReference>
<dbReference type="PROSITE" id="PS50832">
    <property type="entry name" value="S1_IF1_TYPE"/>
    <property type="match status" value="1"/>
</dbReference>
<evidence type="ECO:0000255" key="1">
    <source>
        <dbReference type="PROSITE-ProRule" id="PRU00181"/>
    </source>
</evidence>
<evidence type="ECO:0000256" key="2">
    <source>
        <dbReference type="SAM" id="MobiDB-lite"/>
    </source>
</evidence>
<evidence type="ECO:0000305" key="3"/>
<reference key="1">
    <citation type="journal article" date="1998" name="Science">
        <title>Genome sequence of the nematode C. elegans: a platform for investigating biology.</title>
        <authorList>
            <consortium name="The C. elegans sequencing consortium"/>
        </authorList>
    </citation>
    <scope>NUCLEOTIDE SEQUENCE [LARGE SCALE GENOMIC DNA]</scope>
    <source>
        <strain>Bristol N2</strain>
    </source>
</reference>
<accession>Q23646</accession>
<proteinExistence type="inferred from homology"/>
<comment type="similarity">
    <text evidence="3">Belongs to the EIF1AD family.</text>
</comment>